<proteinExistence type="inferred from homology"/>
<sequence>MVQVNENEYRLKFFLNNNYNRKICQVCQTPFWTKDKERNVCADIPCTDYYFFDLNIKSPPLTVREARQKFLKFFEKKGHTIIPPKPVLARWREDLYLTIASIVDFQPFVTSGIVPPPANPLVLSQPCIRLEDVDNVGVTFGRHLTTFEMAAHHAFNYPDKQIYWKDETVELSKEFFVEEIGIPEEELNYKESWWEGGGNAGPSFEVTVGGLELATLVFMQYEIKDGNYVPLKLKIVDTGYGVERIAWFTQKTPTAFHAIYGNLVYTFFNKIGAPLVDDELLKTAAILAGRIDPDKPETIKRHREEVAKKLGLDLKYVDQELTRAARVFQVLDHTKTIALMLADGLVPSNSGEGYLGRLLIRRALRVLRLLGSDIKLYELVKEQIEYWKEDFPQLLKNKDYILDVVNLEQERFNETLSKISLTASSLSRRKEISVDDLVKLYDSNGIPPDLLVEEIRKINPEIKVEVPYNFYGLVAKRHQTVPLKDTKKEKLPKDVIDLAENLPPTKKLYYEDQYKRSFTAKVVSVYKNYLVLDQTTFYPEGGGQIGDTGIIKDEKGNTYQVVDTQKVKDVIFHILDKEPSLKEGDEVYGEIDWQRRYRIMKHHTVTHVILSAARKVLGEHVWQAGAEKTPQKGRLDITHYKLPTEEEIKKIEDLANYIINDRRSVRPLIINRTEAEMKYGVSIYAGGVPEGADVRLIEIKDWDIEGCGGTHLSNTSEIGALKIINVEKIQDGVIRLEYVAGDVVAQYARQEEDKLKEISRQLSTSPEQIEVRLKRFLEEYKEKEELLNQYRKMMLQEIENISKKETVNGVTIYIINLFDEELRKEAMRKLTMNQKSIVVNISNKGNNNVVEIATSNDLRVDKIIEALRREGGKGGGKGTYGSITTQLNVDKIVNTIKSTINNGI</sequence>
<organism>
    <name type="scientific">Sulfurisphaera tokodaii (strain DSM 16993 / JCM 10545 / NBRC 100140 / 7)</name>
    <name type="common">Sulfolobus tokodaii</name>
    <dbReference type="NCBI Taxonomy" id="273063"/>
    <lineage>
        <taxon>Archaea</taxon>
        <taxon>Thermoproteota</taxon>
        <taxon>Thermoprotei</taxon>
        <taxon>Sulfolobales</taxon>
        <taxon>Sulfolobaceae</taxon>
        <taxon>Sulfurisphaera</taxon>
    </lineage>
</organism>
<keyword id="KW-0030">Aminoacyl-tRNA synthetase</keyword>
<keyword id="KW-0067">ATP-binding</keyword>
<keyword id="KW-0963">Cytoplasm</keyword>
<keyword id="KW-0436">Ligase</keyword>
<keyword id="KW-0479">Metal-binding</keyword>
<keyword id="KW-0547">Nucleotide-binding</keyword>
<keyword id="KW-0648">Protein biosynthesis</keyword>
<keyword id="KW-1185">Reference proteome</keyword>
<keyword id="KW-0694">RNA-binding</keyword>
<keyword id="KW-0820">tRNA-binding</keyword>
<keyword id="KW-0862">Zinc</keyword>
<protein>
    <recommendedName>
        <fullName evidence="1">Alanine--tRNA ligase</fullName>
        <ecNumber evidence="1">6.1.1.7</ecNumber>
    </recommendedName>
    <alternativeName>
        <fullName evidence="1">Alanyl-tRNA synthetase</fullName>
        <shortName evidence="1">AlaRS</shortName>
    </alternativeName>
</protein>
<accession>Q971J4</accession>
<accession>F9VP33</accession>
<feature type="chain" id="PRO_0000075278" description="Alanine--tRNA ligase">
    <location>
        <begin position="1"/>
        <end position="904"/>
    </location>
</feature>
<feature type="binding site" evidence="1">
    <location>
        <position position="603"/>
    </location>
    <ligand>
        <name>Zn(2+)</name>
        <dbReference type="ChEBI" id="CHEBI:29105"/>
    </ligand>
</feature>
<feature type="binding site" evidence="1">
    <location>
        <position position="607"/>
    </location>
    <ligand>
        <name>Zn(2+)</name>
        <dbReference type="ChEBI" id="CHEBI:29105"/>
    </ligand>
</feature>
<feature type="binding site" evidence="1">
    <location>
        <position position="707"/>
    </location>
    <ligand>
        <name>Zn(2+)</name>
        <dbReference type="ChEBI" id="CHEBI:29105"/>
    </ligand>
</feature>
<feature type="binding site" evidence="1">
    <location>
        <position position="711"/>
    </location>
    <ligand>
        <name>Zn(2+)</name>
        <dbReference type="ChEBI" id="CHEBI:29105"/>
    </ligand>
</feature>
<reference key="1">
    <citation type="journal article" date="2001" name="DNA Res.">
        <title>Complete genome sequence of an aerobic thermoacidophilic Crenarchaeon, Sulfolobus tokodaii strain7.</title>
        <authorList>
            <person name="Kawarabayasi Y."/>
            <person name="Hino Y."/>
            <person name="Horikawa H."/>
            <person name="Jin-no K."/>
            <person name="Takahashi M."/>
            <person name="Sekine M."/>
            <person name="Baba S."/>
            <person name="Ankai A."/>
            <person name="Kosugi H."/>
            <person name="Hosoyama A."/>
            <person name="Fukui S."/>
            <person name="Nagai Y."/>
            <person name="Nishijima K."/>
            <person name="Otsuka R."/>
            <person name="Nakazawa H."/>
            <person name="Takamiya M."/>
            <person name="Kato Y."/>
            <person name="Yoshizawa T."/>
            <person name="Tanaka T."/>
            <person name="Kudoh Y."/>
            <person name="Yamazaki J."/>
            <person name="Kushida N."/>
            <person name="Oguchi A."/>
            <person name="Aoki K."/>
            <person name="Masuda S."/>
            <person name="Yanagii M."/>
            <person name="Nishimura M."/>
            <person name="Yamagishi A."/>
            <person name="Oshima T."/>
            <person name="Kikuchi H."/>
        </authorList>
    </citation>
    <scope>NUCLEOTIDE SEQUENCE [LARGE SCALE GENOMIC DNA]</scope>
    <source>
        <strain>DSM 16993 / JCM 10545 / NBRC 100140 / 7</strain>
    </source>
</reference>
<name>SYA_SULTO</name>
<evidence type="ECO:0000255" key="1">
    <source>
        <dbReference type="HAMAP-Rule" id="MF_00036"/>
    </source>
</evidence>
<comment type="function">
    <text evidence="1">Catalyzes the attachment of alanine to tRNA(Ala) in a two-step reaction: alanine is first activated by ATP to form Ala-AMP and then transferred to the acceptor end of tRNA(Ala). Also edits incorrectly charged Ser-tRNA(Ala) and Gly-tRNA(Ala) via its editing domain.</text>
</comment>
<comment type="catalytic activity">
    <reaction evidence="1">
        <text>tRNA(Ala) + L-alanine + ATP = L-alanyl-tRNA(Ala) + AMP + diphosphate</text>
        <dbReference type="Rhea" id="RHEA:12540"/>
        <dbReference type="Rhea" id="RHEA-COMP:9657"/>
        <dbReference type="Rhea" id="RHEA-COMP:9923"/>
        <dbReference type="ChEBI" id="CHEBI:30616"/>
        <dbReference type="ChEBI" id="CHEBI:33019"/>
        <dbReference type="ChEBI" id="CHEBI:57972"/>
        <dbReference type="ChEBI" id="CHEBI:78442"/>
        <dbReference type="ChEBI" id="CHEBI:78497"/>
        <dbReference type="ChEBI" id="CHEBI:456215"/>
        <dbReference type="EC" id="6.1.1.7"/>
    </reaction>
</comment>
<comment type="cofactor">
    <cofactor evidence="1">
        <name>Zn(2+)</name>
        <dbReference type="ChEBI" id="CHEBI:29105"/>
    </cofactor>
    <text evidence="1">Binds 1 zinc ion per subunit.</text>
</comment>
<comment type="subcellular location">
    <subcellularLocation>
        <location evidence="1">Cytoplasm</location>
    </subcellularLocation>
</comment>
<comment type="domain">
    <text evidence="1">Consists of three domains; the N-terminal catalytic domain, the editing domain and the C-terminal C-Ala domain. The editing domain removes incorrectly charged amino acids, while the C-Ala domain, along with tRNA(Ala), serves as a bridge to cooperatively bring together the editing and aminoacylation centers thus stimulating deacylation of misacylated tRNAs.</text>
</comment>
<comment type="similarity">
    <text evidence="1">Belongs to the class-II aminoacyl-tRNA synthetase family.</text>
</comment>
<dbReference type="EC" id="6.1.1.7" evidence="1"/>
<dbReference type="EMBL" id="BA000023">
    <property type="protein sequence ID" value="BAK54541.1"/>
    <property type="molecule type" value="Genomic_DNA"/>
</dbReference>
<dbReference type="RefSeq" id="WP_010979404.1">
    <property type="nucleotide sequence ID" value="NC_003106.2"/>
</dbReference>
<dbReference type="SMR" id="Q971J4"/>
<dbReference type="DIP" id="DIP-48908N"/>
<dbReference type="STRING" id="273063.STK_13640"/>
<dbReference type="GeneID" id="1459388"/>
<dbReference type="KEGG" id="sto:STK_13640"/>
<dbReference type="PATRIC" id="fig|273063.9.peg.1559"/>
<dbReference type="eggNOG" id="arCOG01255">
    <property type="taxonomic scope" value="Archaea"/>
</dbReference>
<dbReference type="OrthoDB" id="7506at2157"/>
<dbReference type="Proteomes" id="UP000001015">
    <property type="component" value="Chromosome"/>
</dbReference>
<dbReference type="GO" id="GO:0005737">
    <property type="term" value="C:cytoplasm"/>
    <property type="evidence" value="ECO:0007669"/>
    <property type="project" value="UniProtKB-SubCell"/>
</dbReference>
<dbReference type="GO" id="GO:0004813">
    <property type="term" value="F:alanine-tRNA ligase activity"/>
    <property type="evidence" value="ECO:0007669"/>
    <property type="project" value="UniProtKB-UniRule"/>
</dbReference>
<dbReference type="GO" id="GO:0002161">
    <property type="term" value="F:aminoacyl-tRNA deacylase activity"/>
    <property type="evidence" value="ECO:0007669"/>
    <property type="project" value="UniProtKB-ARBA"/>
</dbReference>
<dbReference type="GO" id="GO:0005524">
    <property type="term" value="F:ATP binding"/>
    <property type="evidence" value="ECO:0007669"/>
    <property type="project" value="UniProtKB-UniRule"/>
</dbReference>
<dbReference type="GO" id="GO:0000049">
    <property type="term" value="F:tRNA binding"/>
    <property type="evidence" value="ECO:0007669"/>
    <property type="project" value="UniProtKB-KW"/>
</dbReference>
<dbReference type="GO" id="GO:0008270">
    <property type="term" value="F:zinc ion binding"/>
    <property type="evidence" value="ECO:0007669"/>
    <property type="project" value="UniProtKB-UniRule"/>
</dbReference>
<dbReference type="GO" id="GO:0006419">
    <property type="term" value="P:alanyl-tRNA aminoacylation"/>
    <property type="evidence" value="ECO:0007669"/>
    <property type="project" value="UniProtKB-UniRule"/>
</dbReference>
<dbReference type="CDD" id="cd00673">
    <property type="entry name" value="AlaRS_core"/>
    <property type="match status" value="1"/>
</dbReference>
<dbReference type="FunFam" id="2.40.30.130:FF:000010">
    <property type="entry name" value="Alanine--tRNA ligase"/>
    <property type="match status" value="1"/>
</dbReference>
<dbReference type="FunFam" id="3.30.54.20:FF:000004">
    <property type="entry name" value="Alanine--tRNA ligase"/>
    <property type="match status" value="1"/>
</dbReference>
<dbReference type="FunFam" id="3.30.930.10:FF:000056">
    <property type="entry name" value="Alanine--tRNA ligase"/>
    <property type="match status" value="1"/>
</dbReference>
<dbReference type="Gene3D" id="2.40.30.130">
    <property type="match status" value="1"/>
</dbReference>
<dbReference type="Gene3D" id="3.30.54.20">
    <property type="match status" value="1"/>
</dbReference>
<dbReference type="Gene3D" id="6.10.250.550">
    <property type="match status" value="1"/>
</dbReference>
<dbReference type="Gene3D" id="3.30.930.10">
    <property type="entry name" value="Bira Bifunctional Protein, Domain 2"/>
    <property type="match status" value="1"/>
</dbReference>
<dbReference type="Gene3D" id="3.30.980.10">
    <property type="entry name" value="Threonyl-trna Synthetase, Chain A, domain 2"/>
    <property type="match status" value="1"/>
</dbReference>
<dbReference type="HAMAP" id="MF_00036_A">
    <property type="entry name" value="Ala_tRNA_synth_A"/>
    <property type="match status" value="1"/>
</dbReference>
<dbReference type="InterPro" id="IPR045864">
    <property type="entry name" value="aa-tRNA-synth_II/BPL/LPL"/>
</dbReference>
<dbReference type="InterPro" id="IPR002318">
    <property type="entry name" value="Ala-tRNA-lgiase_IIc"/>
</dbReference>
<dbReference type="InterPro" id="IPR018162">
    <property type="entry name" value="Ala-tRNA-ligase_IIc_anticod-bd"/>
</dbReference>
<dbReference type="InterPro" id="IPR018165">
    <property type="entry name" value="Ala-tRNA-synth_IIc_core"/>
</dbReference>
<dbReference type="InterPro" id="IPR018164">
    <property type="entry name" value="Ala-tRNA-synth_IIc_N"/>
</dbReference>
<dbReference type="InterPro" id="IPR022429">
    <property type="entry name" value="Ala-tRNA_lgiase_arc"/>
</dbReference>
<dbReference type="InterPro" id="IPR050058">
    <property type="entry name" value="Ala-tRNA_ligase"/>
</dbReference>
<dbReference type="InterPro" id="IPR018163">
    <property type="entry name" value="Thr/Ala-tRNA-synth_IIc_edit"/>
</dbReference>
<dbReference type="InterPro" id="IPR009000">
    <property type="entry name" value="Transl_B-barrel_sf"/>
</dbReference>
<dbReference type="InterPro" id="IPR012947">
    <property type="entry name" value="tRNA_SAD"/>
</dbReference>
<dbReference type="NCBIfam" id="TIGR03683">
    <property type="entry name" value="A-tRNA_syn_arch"/>
    <property type="match status" value="1"/>
</dbReference>
<dbReference type="NCBIfam" id="TIGR00344">
    <property type="entry name" value="alaS"/>
    <property type="match status" value="1"/>
</dbReference>
<dbReference type="PANTHER" id="PTHR11777:SF9">
    <property type="entry name" value="ALANINE--TRNA LIGASE, CYTOPLASMIC"/>
    <property type="match status" value="1"/>
</dbReference>
<dbReference type="PANTHER" id="PTHR11777">
    <property type="entry name" value="ALANYL-TRNA SYNTHETASE"/>
    <property type="match status" value="1"/>
</dbReference>
<dbReference type="Pfam" id="PF01411">
    <property type="entry name" value="tRNA-synt_2c"/>
    <property type="match status" value="1"/>
</dbReference>
<dbReference type="Pfam" id="PF07973">
    <property type="entry name" value="tRNA_SAD"/>
    <property type="match status" value="1"/>
</dbReference>
<dbReference type="PRINTS" id="PR00980">
    <property type="entry name" value="TRNASYNTHALA"/>
</dbReference>
<dbReference type="SMART" id="SM00863">
    <property type="entry name" value="tRNA_SAD"/>
    <property type="match status" value="1"/>
</dbReference>
<dbReference type="SUPFAM" id="SSF55681">
    <property type="entry name" value="Class II aaRS and biotin synthetases"/>
    <property type="match status" value="1"/>
</dbReference>
<dbReference type="SUPFAM" id="SSF101353">
    <property type="entry name" value="Putative anticodon-binding domain of alanyl-tRNA synthetase (AlaRS)"/>
    <property type="match status" value="1"/>
</dbReference>
<dbReference type="SUPFAM" id="SSF55186">
    <property type="entry name" value="ThrRS/AlaRS common domain"/>
    <property type="match status" value="1"/>
</dbReference>
<dbReference type="SUPFAM" id="SSF50447">
    <property type="entry name" value="Translation proteins"/>
    <property type="match status" value="1"/>
</dbReference>
<dbReference type="PROSITE" id="PS50860">
    <property type="entry name" value="AA_TRNA_LIGASE_II_ALA"/>
    <property type="match status" value="1"/>
</dbReference>
<gene>
    <name evidence="1" type="primary">alaS</name>
    <name type="ordered locus">STK_13640</name>
</gene>